<protein>
    <recommendedName>
        <fullName>FHIP family protein GE18198</fullName>
    </recommendedName>
</protein>
<evidence type="ECO:0000250" key="1"/>
<evidence type="ECO:0000256" key="2">
    <source>
        <dbReference type="SAM" id="MobiDB-lite"/>
    </source>
</evidence>
<evidence type="ECO:0000305" key="3"/>
<dbReference type="EMBL" id="CM000157">
    <property type="protein sequence ID" value="EDW87476.1"/>
    <property type="molecule type" value="Genomic_DNA"/>
</dbReference>
<dbReference type="RefSeq" id="XP_002087764.1">
    <property type="nucleotide sequence ID" value="XM_002087728.2"/>
</dbReference>
<dbReference type="RefSeq" id="XP_015053443.1">
    <property type="nucleotide sequence ID" value="XM_015197957.1"/>
</dbReference>
<dbReference type="SMR" id="B4NXB9"/>
<dbReference type="EnsemblMetazoa" id="FBtr0264716">
    <property type="protein sequence ID" value="FBpp0263208"/>
    <property type="gene ID" value="FBgn0235629"/>
</dbReference>
<dbReference type="EnsemblMetazoa" id="FBtr0402390">
    <property type="protein sequence ID" value="FBpp0361243"/>
    <property type="gene ID" value="FBgn0235629"/>
</dbReference>
<dbReference type="EnsemblMetazoa" id="FBtr0402604">
    <property type="protein sequence ID" value="FBpp0361443"/>
    <property type="gene ID" value="FBgn0235629"/>
</dbReference>
<dbReference type="EnsemblMetazoa" id="XM_015197956.3">
    <property type="protein sequence ID" value="XP_015053442.1"/>
    <property type="gene ID" value="LOC6526656"/>
</dbReference>
<dbReference type="GeneID" id="6526656"/>
<dbReference type="KEGG" id="dya:Dyak_GE18198"/>
<dbReference type="eggNOG" id="KOG3695">
    <property type="taxonomic scope" value="Eukaryota"/>
</dbReference>
<dbReference type="HOGENOM" id="CLU_007807_0_0_1"/>
<dbReference type="OMA" id="RMPSLVQ"/>
<dbReference type="OrthoDB" id="6287422at2759"/>
<dbReference type="PhylomeDB" id="B4NXB9"/>
<dbReference type="Proteomes" id="UP000002282">
    <property type="component" value="Chromosome 2L"/>
</dbReference>
<dbReference type="InterPro" id="IPR019384">
    <property type="entry name" value="FHIP"/>
</dbReference>
<dbReference type="InterPro" id="IPR045669">
    <property type="entry name" value="FHIP_C"/>
</dbReference>
<dbReference type="InterPro" id="IPR045668">
    <property type="entry name" value="FHIP_KELAA_motif"/>
</dbReference>
<dbReference type="PANTHER" id="PTHR21705:SF11">
    <property type="entry name" value="FHIP FAMILY PROTEIN CG3558"/>
    <property type="match status" value="1"/>
</dbReference>
<dbReference type="PANTHER" id="PTHR21705">
    <property type="entry name" value="RAI16 PROTEIN-RELATED"/>
    <property type="match status" value="1"/>
</dbReference>
<dbReference type="Pfam" id="PF19314">
    <property type="entry name" value="DUF5917"/>
    <property type="match status" value="1"/>
</dbReference>
<dbReference type="Pfam" id="PF19311">
    <property type="entry name" value="KELAA"/>
    <property type="match status" value="1"/>
</dbReference>
<dbReference type="Pfam" id="PF10257">
    <property type="entry name" value="RAI16-like"/>
    <property type="match status" value="1"/>
</dbReference>
<comment type="similarity">
    <text evidence="3">Belongs to the FHIP family.</text>
</comment>
<proteinExistence type="inferred from homology"/>
<accession>B4NXB9</accession>
<gene>
    <name type="ORF">GE18198</name>
</gene>
<name>U518_DROYA</name>
<feature type="chain" id="PRO_0000379015" description="FHIP family protein GE18198">
    <location>
        <begin position="1"/>
        <end position="1050"/>
    </location>
</feature>
<feature type="region of interest" description="Disordered" evidence="2">
    <location>
        <begin position="800"/>
        <end position="827"/>
    </location>
</feature>
<feature type="region of interest" description="Disordered" evidence="2">
    <location>
        <begin position="865"/>
        <end position="888"/>
    </location>
</feature>
<feature type="region of interest" description="Disordered" evidence="2">
    <location>
        <begin position="911"/>
        <end position="954"/>
    </location>
</feature>
<feature type="region of interest" description="Disordered" evidence="2">
    <location>
        <begin position="968"/>
        <end position="995"/>
    </location>
</feature>
<feature type="compositionally biased region" description="Polar residues" evidence="2">
    <location>
        <begin position="808"/>
        <end position="826"/>
    </location>
</feature>
<feature type="compositionally biased region" description="Low complexity" evidence="2">
    <location>
        <begin position="872"/>
        <end position="888"/>
    </location>
</feature>
<feature type="compositionally biased region" description="Polar residues" evidence="2">
    <location>
        <begin position="918"/>
        <end position="935"/>
    </location>
</feature>
<feature type="compositionally biased region" description="Low complexity" evidence="2">
    <location>
        <begin position="941"/>
        <end position="954"/>
    </location>
</feature>
<feature type="compositionally biased region" description="Polar residues" evidence="2">
    <location>
        <begin position="968"/>
        <end position="977"/>
    </location>
</feature>
<feature type="modified residue" description="Phosphoserine" evidence="1">
    <location>
        <position position="498"/>
    </location>
</feature>
<feature type="modified residue" description="Phosphoserine" evidence="1">
    <location>
        <position position="805"/>
    </location>
</feature>
<organism>
    <name type="scientific">Drosophila yakuba</name>
    <name type="common">Fruit fly</name>
    <dbReference type="NCBI Taxonomy" id="7245"/>
    <lineage>
        <taxon>Eukaryota</taxon>
        <taxon>Metazoa</taxon>
        <taxon>Ecdysozoa</taxon>
        <taxon>Arthropoda</taxon>
        <taxon>Hexapoda</taxon>
        <taxon>Insecta</taxon>
        <taxon>Pterygota</taxon>
        <taxon>Neoptera</taxon>
        <taxon>Endopterygota</taxon>
        <taxon>Diptera</taxon>
        <taxon>Brachycera</taxon>
        <taxon>Muscomorpha</taxon>
        <taxon>Ephydroidea</taxon>
        <taxon>Drosophilidae</taxon>
        <taxon>Drosophila</taxon>
        <taxon>Sophophora</taxon>
    </lineage>
</organism>
<sequence>MWLRQSSGGGVASAGHGGPLRQRPIDAATDCDPRACYDSFCKHWQQAFEIIQHSAPPSHDDVLGVVSHLDYMVTLLLVELHHCNKVSLPAAEASGPPAAPCLEFLLSENLLDKLYEWACTTGRYANAVRLEQLKLYELLVSHSRHQLLCHEPFLRPLLKILASSQGEIFPPDLEKRLVILLNQLCVVLMQNVHLLDLFFFSAQTQVQEQILNGNVAPPKSGTTTNFIIFSLLIPYVHREGSLGHQARDALLLCMALSQKNSNIGTYIAQYSSICPLLVTGLGGLYSRLPNSIEISSIDWHRITPDDVTEIPELTLFMNALEFCNAVVQVAHEMIKQQLLDFMYQGFIVPVLGPAILQTLKGKHFQTNIDSQISAMSYLDLILRSITEPGLLRAFVRFLLDTEKFDGERILDALVERLNSPDANLCMVTMALFDTLLGLHCEDLMLELLLKFMLPGKHVPISHRHKINKIDPYLNSSEFFLDLSPDVMKRARDLARPKSVHEPVVSDLTPLPSLPSPVMSKTIGANWNYYGVHTGDSLYANIQAYLFEAHWRIAQCQRDCLKWANSYRYQKWPRHGQGRVHAHALELARQFFSEFGGGPIAANETSEKQLDSLQSIGESSGYESFKWRPADEESEATDTTLATTASEADLDHNSSSLSSVLGASSKREAWRTSNNNRNELILTDLEFSEDLFAQGTVSLGPFLNAIWGKLQTFTSNSLYVNLHLTGLITRLAWYPLPLIHSLLLRSDIAITSDTPSFHQVLRILKQQIDAELPVTEDSLEIIDVARSSLIDREFRLANARKGNEGSPMHHSQQQQMATNSGQQQGQLRSAYATLSAATPVQATPTSAYDPFKRSDNKRRSISKSITSMFSRKSASNTSTTPPNGSSASSGLSQIYAFFTGAASNLVGTNASTDGRGMSHAQTSAGTCETSLSTQPQAGAPRTGAIATSATASGSNSSIAGSTLTLSAQSNTTTHSASTLHGLDGGPSTGGFNSEPASLDSVASMGIIASTSGTERSRDLALCAVLMDEWLKELAAIAQEQSVVLVTEQGSL</sequence>
<reference key="1">
    <citation type="journal article" date="2007" name="Nature">
        <title>Evolution of genes and genomes on the Drosophila phylogeny.</title>
        <authorList>
            <consortium name="Drosophila 12 genomes consortium"/>
        </authorList>
    </citation>
    <scope>NUCLEOTIDE SEQUENCE [LARGE SCALE GENOMIC DNA]</scope>
    <source>
        <strain>Tai18E2 / Tucson 14021-0261.01</strain>
    </source>
</reference>
<keyword id="KW-0597">Phosphoprotein</keyword>